<dbReference type="EMBL" id="CP000812">
    <property type="protein sequence ID" value="ABV33140.1"/>
    <property type="molecule type" value="Genomic_DNA"/>
</dbReference>
<dbReference type="RefSeq" id="WP_012002621.1">
    <property type="nucleotide sequence ID" value="NZ_BSDV01000001.1"/>
</dbReference>
<dbReference type="SMR" id="A8F4Q6"/>
<dbReference type="STRING" id="416591.Tlet_0574"/>
<dbReference type="KEGG" id="tle:Tlet_0574"/>
<dbReference type="eggNOG" id="COG0048">
    <property type="taxonomic scope" value="Bacteria"/>
</dbReference>
<dbReference type="HOGENOM" id="CLU_104295_1_2_0"/>
<dbReference type="OrthoDB" id="9802366at2"/>
<dbReference type="Proteomes" id="UP000002016">
    <property type="component" value="Chromosome"/>
</dbReference>
<dbReference type="GO" id="GO:0015935">
    <property type="term" value="C:small ribosomal subunit"/>
    <property type="evidence" value="ECO:0007669"/>
    <property type="project" value="InterPro"/>
</dbReference>
<dbReference type="GO" id="GO:0019843">
    <property type="term" value="F:rRNA binding"/>
    <property type="evidence" value="ECO:0007669"/>
    <property type="project" value="UniProtKB-UniRule"/>
</dbReference>
<dbReference type="GO" id="GO:0003735">
    <property type="term" value="F:structural constituent of ribosome"/>
    <property type="evidence" value="ECO:0007669"/>
    <property type="project" value="InterPro"/>
</dbReference>
<dbReference type="GO" id="GO:0000049">
    <property type="term" value="F:tRNA binding"/>
    <property type="evidence" value="ECO:0007669"/>
    <property type="project" value="UniProtKB-UniRule"/>
</dbReference>
<dbReference type="GO" id="GO:0006412">
    <property type="term" value="P:translation"/>
    <property type="evidence" value="ECO:0007669"/>
    <property type="project" value="UniProtKB-UniRule"/>
</dbReference>
<dbReference type="CDD" id="cd03368">
    <property type="entry name" value="Ribosomal_S12"/>
    <property type="match status" value="1"/>
</dbReference>
<dbReference type="FunFam" id="2.40.50.140:FF:000001">
    <property type="entry name" value="30S ribosomal protein S12"/>
    <property type="match status" value="1"/>
</dbReference>
<dbReference type="Gene3D" id="2.40.50.140">
    <property type="entry name" value="Nucleic acid-binding proteins"/>
    <property type="match status" value="1"/>
</dbReference>
<dbReference type="HAMAP" id="MF_00403_B">
    <property type="entry name" value="Ribosomal_uS12_B"/>
    <property type="match status" value="1"/>
</dbReference>
<dbReference type="InterPro" id="IPR012340">
    <property type="entry name" value="NA-bd_OB-fold"/>
</dbReference>
<dbReference type="InterPro" id="IPR006032">
    <property type="entry name" value="Ribosomal_uS12"/>
</dbReference>
<dbReference type="InterPro" id="IPR005679">
    <property type="entry name" value="Ribosomal_uS12_bac"/>
</dbReference>
<dbReference type="NCBIfam" id="TIGR00981">
    <property type="entry name" value="rpsL_bact"/>
    <property type="match status" value="1"/>
</dbReference>
<dbReference type="PANTHER" id="PTHR11652">
    <property type="entry name" value="30S RIBOSOMAL PROTEIN S12 FAMILY MEMBER"/>
    <property type="match status" value="1"/>
</dbReference>
<dbReference type="Pfam" id="PF00164">
    <property type="entry name" value="Ribosom_S12_S23"/>
    <property type="match status" value="1"/>
</dbReference>
<dbReference type="PIRSF" id="PIRSF002133">
    <property type="entry name" value="Ribosomal_S12/S23"/>
    <property type="match status" value="1"/>
</dbReference>
<dbReference type="PRINTS" id="PR01034">
    <property type="entry name" value="RIBOSOMALS12"/>
</dbReference>
<dbReference type="SUPFAM" id="SSF50249">
    <property type="entry name" value="Nucleic acid-binding proteins"/>
    <property type="match status" value="1"/>
</dbReference>
<dbReference type="PROSITE" id="PS00055">
    <property type="entry name" value="RIBOSOMAL_S12"/>
    <property type="match status" value="1"/>
</dbReference>
<gene>
    <name evidence="2" type="primary">rpsL</name>
    <name type="ordered locus">Tlet_0574</name>
</gene>
<accession>A8F4Q6</accession>
<feature type="chain" id="PRO_1000060819" description="Small ribosomal subunit protein uS12">
    <location>
        <begin position="1"/>
        <end position="124"/>
    </location>
</feature>
<feature type="region of interest" description="Disordered" evidence="3">
    <location>
        <begin position="104"/>
        <end position="124"/>
    </location>
</feature>
<feature type="compositionally biased region" description="Basic residues" evidence="3">
    <location>
        <begin position="112"/>
        <end position="124"/>
    </location>
</feature>
<feature type="modified residue" description="3-methylthioaspartic acid" evidence="1">
    <location>
        <position position="89"/>
    </location>
</feature>
<evidence type="ECO:0000250" key="1"/>
<evidence type="ECO:0000255" key="2">
    <source>
        <dbReference type="HAMAP-Rule" id="MF_00403"/>
    </source>
</evidence>
<evidence type="ECO:0000256" key="3">
    <source>
        <dbReference type="SAM" id="MobiDB-lite"/>
    </source>
</evidence>
<evidence type="ECO:0000305" key="4"/>
<name>RS12_PSELT</name>
<proteinExistence type="inferred from homology"/>
<comment type="function">
    <text evidence="2">With S4 and S5 plays an important role in translational accuracy.</text>
</comment>
<comment type="function">
    <text evidence="2">Interacts with and stabilizes bases of the 16S rRNA that are involved in tRNA selection in the A site and with the mRNA backbone. Located at the interface of the 30S and 50S subunits, it traverses the body of the 30S subunit contacting proteins on the other side and probably holding the rRNA structure together. The combined cluster of proteins S8, S12 and S17 appears to hold together the shoulder and platform of the 30S subunit.</text>
</comment>
<comment type="subunit">
    <text evidence="2">Part of the 30S ribosomal subunit. Contacts proteins S8 and S17. May interact with IF1 in the 30S initiation complex.</text>
</comment>
<comment type="similarity">
    <text evidence="2">Belongs to the universal ribosomal protein uS12 family.</text>
</comment>
<protein>
    <recommendedName>
        <fullName evidence="2">Small ribosomal subunit protein uS12</fullName>
    </recommendedName>
    <alternativeName>
        <fullName evidence="4">30S ribosomal protein S12</fullName>
    </alternativeName>
</protein>
<organism>
    <name type="scientific">Pseudothermotoga lettingae (strain ATCC BAA-301 / DSM 14385 / NBRC 107922 / TMO)</name>
    <name type="common">Thermotoga lettingae</name>
    <dbReference type="NCBI Taxonomy" id="416591"/>
    <lineage>
        <taxon>Bacteria</taxon>
        <taxon>Thermotogati</taxon>
        <taxon>Thermotogota</taxon>
        <taxon>Thermotogae</taxon>
        <taxon>Thermotogales</taxon>
        <taxon>Thermotogaceae</taxon>
        <taxon>Pseudothermotoga</taxon>
    </lineage>
</organism>
<keyword id="KW-0488">Methylation</keyword>
<keyword id="KW-1185">Reference proteome</keyword>
<keyword id="KW-0687">Ribonucleoprotein</keyword>
<keyword id="KW-0689">Ribosomal protein</keyword>
<keyword id="KW-0694">RNA-binding</keyword>
<keyword id="KW-0699">rRNA-binding</keyword>
<keyword id="KW-0820">tRNA-binding</keyword>
<sequence>MPTINQLIRLGRERKVEKPKAPALQGNPQKRGVCVRVTTMTPKKPNSALRKIARVRLSNGIEVTAYIPGIGHNLQEHSVVLVRGGRVKDLPGIRYKIIRGTLDTAGVENRKQSRSKYGAKRPKK</sequence>
<reference key="1">
    <citation type="submission" date="2007-08" db="EMBL/GenBank/DDBJ databases">
        <title>Complete sequence of Thermotoga lettingae TMO.</title>
        <authorList>
            <consortium name="US DOE Joint Genome Institute"/>
            <person name="Copeland A."/>
            <person name="Lucas S."/>
            <person name="Lapidus A."/>
            <person name="Barry K."/>
            <person name="Glavina del Rio T."/>
            <person name="Dalin E."/>
            <person name="Tice H."/>
            <person name="Pitluck S."/>
            <person name="Foster B."/>
            <person name="Bruce D."/>
            <person name="Schmutz J."/>
            <person name="Larimer F."/>
            <person name="Land M."/>
            <person name="Hauser L."/>
            <person name="Kyrpides N."/>
            <person name="Mikhailova N."/>
            <person name="Nelson K."/>
            <person name="Gogarten J.P."/>
            <person name="Noll K."/>
            <person name="Richardson P."/>
        </authorList>
    </citation>
    <scope>NUCLEOTIDE SEQUENCE [LARGE SCALE GENOMIC DNA]</scope>
    <source>
        <strain>ATCC BAA-301 / DSM 14385 / NBRC 107922 / TMO</strain>
    </source>
</reference>